<organism>
    <name type="scientific">Welwitschia mirabilis</name>
    <name type="common">Tree tumbo</name>
    <name type="synonym">Welwitschia bainesii</name>
    <dbReference type="NCBI Taxonomy" id="3377"/>
    <lineage>
        <taxon>Eukaryota</taxon>
        <taxon>Viridiplantae</taxon>
        <taxon>Streptophyta</taxon>
        <taxon>Embryophyta</taxon>
        <taxon>Tracheophyta</taxon>
        <taxon>Spermatophyta</taxon>
        <taxon>Gnetopsida</taxon>
        <taxon>Gnetidae</taxon>
        <taxon>Welwitschiales</taxon>
        <taxon>Welwitschiaceae</taxon>
        <taxon>Welwitschia</taxon>
    </lineage>
</organism>
<evidence type="ECO:0000255" key="1">
    <source>
        <dbReference type="HAMAP-Rule" id="MF_00441"/>
    </source>
</evidence>
<protein>
    <recommendedName>
        <fullName evidence="1">Photosystem II reaction center protein K</fullName>
        <shortName evidence="1">PSII-K</shortName>
    </recommendedName>
</protein>
<sequence>MLNFLLQNTFVLWSNFILCKLPEAYAVFDPIVDVMPVIPVFFFLLAFVWQAAVSFR</sequence>
<comment type="function">
    <text evidence="1">One of the components of the core complex of photosystem II (PSII). PSII is a light-driven water:plastoquinone oxidoreductase that uses light energy to abstract electrons from H(2)O, generating O(2) and a proton gradient subsequently used for ATP formation. It consists of a core antenna complex that captures photons, and an electron transfer chain that converts photonic excitation into a charge separation.</text>
</comment>
<comment type="subunit">
    <text evidence="1">PSII is composed of 1 copy each of membrane proteins PsbA, PsbB, PsbC, PsbD, PsbE, PsbF, PsbH, PsbI, PsbJ, PsbK, PsbL, PsbM, PsbT, PsbX, PsbY, PsbZ, Psb30/Ycf12, at least 3 peripheral proteins of the oxygen-evolving complex and a large number of cofactors. It forms dimeric complexes.</text>
</comment>
<comment type="subcellular location">
    <subcellularLocation>
        <location evidence="1">Plastid</location>
        <location evidence="1">Chloroplast thylakoid membrane</location>
        <topology evidence="1">Single-pass membrane protein</topology>
    </subcellularLocation>
</comment>
<comment type="similarity">
    <text evidence="1">Belongs to the PsbK family.</text>
</comment>
<gene>
    <name evidence="1" type="primary">psbK</name>
</gene>
<feature type="propeptide" id="PRO_1000192879" evidence="1">
    <location>
        <begin position="1"/>
        <end position="19"/>
    </location>
</feature>
<feature type="chain" id="PRO_1000192880" description="Photosystem II reaction center protein K" evidence="1">
    <location>
        <begin position="20"/>
        <end position="56"/>
    </location>
</feature>
<feature type="transmembrane region" description="Helical" evidence="1">
    <location>
        <begin position="35"/>
        <end position="55"/>
    </location>
</feature>
<proteinExistence type="inferred from homology"/>
<geneLocation type="chloroplast"/>
<reference key="1">
    <citation type="journal article" date="2008" name="BMC Evol. Biol.">
        <title>The complete plastid genome sequence of Welwitschia mirabilis: an unusually compact plastome with accelerated divergence rates.</title>
        <authorList>
            <person name="McCoy S.R."/>
            <person name="Kuehl J.V."/>
            <person name="Boore J.L."/>
            <person name="Raubeson L.A."/>
        </authorList>
    </citation>
    <scope>NUCLEOTIDE SEQUENCE [LARGE SCALE GENOMIC DNA]</scope>
</reference>
<reference key="2">
    <citation type="journal article" date="2009" name="Mol. Phylogenet. Evol.">
        <title>Evolution of reduced and compact chloroplast genomes (cpDNAs) in gnetophytes: Selection toward a lower-cost strategy.</title>
        <authorList>
            <person name="Wu C.-S."/>
            <person name="Lai Y.-T."/>
            <person name="Lin C.-P."/>
            <person name="Wang Y.-N."/>
            <person name="Chaw S.-M."/>
        </authorList>
    </citation>
    <scope>NUCLEOTIDE SEQUENCE [LARGE SCALE GENOMIC DNA]</scope>
</reference>
<dbReference type="EMBL" id="EU342371">
    <property type="protein sequence ID" value="ABY26795.1"/>
    <property type="molecule type" value="Genomic_DNA"/>
</dbReference>
<dbReference type="EMBL" id="AP009568">
    <property type="protein sequence ID" value="BAH11223.1"/>
    <property type="molecule type" value="Genomic_DNA"/>
</dbReference>
<dbReference type="RefSeq" id="YP_001876582.1">
    <property type="nucleotide sequence ID" value="NC_010654.1"/>
</dbReference>
<dbReference type="SMR" id="B2Y1W5"/>
<dbReference type="GeneID" id="6276232"/>
<dbReference type="GO" id="GO:0009535">
    <property type="term" value="C:chloroplast thylakoid membrane"/>
    <property type="evidence" value="ECO:0007669"/>
    <property type="project" value="UniProtKB-SubCell"/>
</dbReference>
<dbReference type="GO" id="GO:0009539">
    <property type="term" value="C:photosystem II reaction center"/>
    <property type="evidence" value="ECO:0007669"/>
    <property type="project" value="InterPro"/>
</dbReference>
<dbReference type="GO" id="GO:0015979">
    <property type="term" value="P:photosynthesis"/>
    <property type="evidence" value="ECO:0007669"/>
    <property type="project" value="UniProtKB-UniRule"/>
</dbReference>
<dbReference type="HAMAP" id="MF_00441">
    <property type="entry name" value="PSII_PsbK"/>
    <property type="match status" value="1"/>
</dbReference>
<dbReference type="InterPro" id="IPR003687">
    <property type="entry name" value="PSII_PsbK"/>
</dbReference>
<dbReference type="InterPro" id="IPR037270">
    <property type="entry name" value="PSII_PsbK_sf"/>
</dbReference>
<dbReference type="NCBIfam" id="NF002715">
    <property type="entry name" value="PRK02553.1"/>
    <property type="match status" value="1"/>
</dbReference>
<dbReference type="PANTHER" id="PTHR35325">
    <property type="match status" value="1"/>
</dbReference>
<dbReference type="PANTHER" id="PTHR35325:SF1">
    <property type="entry name" value="PHOTOSYSTEM II REACTION CENTER PROTEIN K"/>
    <property type="match status" value="1"/>
</dbReference>
<dbReference type="Pfam" id="PF02533">
    <property type="entry name" value="PsbK"/>
    <property type="match status" value="1"/>
</dbReference>
<dbReference type="SUPFAM" id="SSF161037">
    <property type="entry name" value="Photosystem II reaction center protein K, PsbK"/>
    <property type="match status" value="1"/>
</dbReference>
<accession>B2Y1W5</accession>
<name>PSBK_WELMI</name>
<keyword id="KW-0150">Chloroplast</keyword>
<keyword id="KW-0472">Membrane</keyword>
<keyword id="KW-0602">Photosynthesis</keyword>
<keyword id="KW-0604">Photosystem II</keyword>
<keyword id="KW-0934">Plastid</keyword>
<keyword id="KW-0674">Reaction center</keyword>
<keyword id="KW-0793">Thylakoid</keyword>
<keyword id="KW-0812">Transmembrane</keyword>
<keyword id="KW-1133">Transmembrane helix</keyword>